<sequence>MDIVGGQNLRQMWDDLAGVYGDKTALIFESCEGIVRQFSYASLNEEINRTANLFYSLGIRKGDRVALHLDNCPEFIFCWFGLAKIGAIMVPINARLLGEESAWILQNSQVSLLVTSAQFYPMYREIRQDNSTPLNHICLIGEQLPADDGVSHFTQRQSRQSTTLCYTPALSTDDTAEILFTSGTTSRPKGVVITHYNLRFAGYYSAWQIALRDDDVYMTVMPAFHIDCQCTAAMPAFSAGSTFVLLEKYSARAFWDQVRKYQATVTECIPMMIRTLMVQPAAPTDRQHHLREVMFYLNLSAQEKDAFTERFGVRLLTSYGMTETIVGIIGDRPGDKRRWPSIGRVGFSYEAEIRDDQNRPLPAGEIGEICIKGIPGKTIFKEYYMQPEATARALEPEGWLHTGDSGYQDEDGYFYFVDRRCNMIKRGGENVSCVELENIISAHPKIQDIVVVGIKDAIRDEAIKAFIVLNEGETLSEAEFFSFCENNMAKFKVPSFMEIRTDLPRNCSGKIIKKNLK</sequence>
<protein>
    <recommendedName>
        <fullName evidence="1">Crotonobetaine/carnitine--CoA ligase</fullName>
        <ecNumber evidence="1">6.2.1.48</ecNumber>
    </recommendedName>
</protein>
<comment type="function">
    <text evidence="1">Catalyzes the transfer of CoA to carnitine, generating the initial carnitinyl-CoA needed for the CaiB reaction cycle. Also has activity toward crotonobetaine and gamma-butyrobetaine.</text>
</comment>
<comment type="catalytic activity">
    <reaction evidence="1">
        <text>4-(trimethylamino)butanoate + ATP + CoA = 4-(trimethylamino)butanoyl-CoA + AMP + diphosphate</text>
        <dbReference type="Rhea" id="RHEA:55960"/>
        <dbReference type="ChEBI" id="CHEBI:16244"/>
        <dbReference type="ChEBI" id="CHEBI:30616"/>
        <dbReference type="ChEBI" id="CHEBI:33019"/>
        <dbReference type="ChEBI" id="CHEBI:57287"/>
        <dbReference type="ChEBI" id="CHEBI:61513"/>
        <dbReference type="ChEBI" id="CHEBI:456215"/>
        <dbReference type="EC" id="6.2.1.48"/>
    </reaction>
</comment>
<comment type="catalytic activity">
    <reaction evidence="1">
        <text>crotonobetaine + ATP + CoA = crotonobetainyl-CoA + AMP + diphosphate</text>
        <dbReference type="Rhea" id="RHEA:30079"/>
        <dbReference type="ChEBI" id="CHEBI:17237"/>
        <dbReference type="ChEBI" id="CHEBI:30616"/>
        <dbReference type="ChEBI" id="CHEBI:33019"/>
        <dbReference type="ChEBI" id="CHEBI:57287"/>
        <dbReference type="ChEBI" id="CHEBI:60933"/>
        <dbReference type="ChEBI" id="CHEBI:456215"/>
        <dbReference type="EC" id="6.2.1.48"/>
    </reaction>
</comment>
<comment type="catalytic activity">
    <reaction evidence="1">
        <text>(R)-carnitine + ATP + CoA = (R)-carnitinyl-CoA + AMP + diphosphate</text>
        <dbReference type="Rhea" id="RHEA:28514"/>
        <dbReference type="ChEBI" id="CHEBI:16347"/>
        <dbReference type="ChEBI" id="CHEBI:30616"/>
        <dbReference type="ChEBI" id="CHEBI:33019"/>
        <dbReference type="ChEBI" id="CHEBI:57287"/>
        <dbReference type="ChEBI" id="CHEBI:60932"/>
        <dbReference type="ChEBI" id="CHEBI:456215"/>
        <dbReference type="EC" id="6.2.1.48"/>
    </reaction>
</comment>
<comment type="pathway">
    <text evidence="1">Amine and polyamine metabolism; carnitine metabolism.</text>
</comment>
<comment type="similarity">
    <text evidence="1">Belongs to the ATP-dependent AMP-binding enzyme family.</text>
</comment>
<accession>A9MYJ6</accession>
<evidence type="ECO:0000255" key="1">
    <source>
        <dbReference type="HAMAP-Rule" id="MF_01524"/>
    </source>
</evidence>
<name>CAIC_SALPB</name>
<organism>
    <name type="scientific">Salmonella paratyphi B (strain ATCC BAA-1250 / SPB7)</name>
    <dbReference type="NCBI Taxonomy" id="1016998"/>
    <lineage>
        <taxon>Bacteria</taxon>
        <taxon>Pseudomonadati</taxon>
        <taxon>Pseudomonadota</taxon>
        <taxon>Gammaproteobacteria</taxon>
        <taxon>Enterobacterales</taxon>
        <taxon>Enterobacteriaceae</taxon>
        <taxon>Salmonella</taxon>
    </lineage>
</organism>
<dbReference type="EC" id="6.2.1.48" evidence="1"/>
<dbReference type="EMBL" id="CP000886">
    <property type="protein sequence ID" value="ABX65530.1"/>
    <property type="molecule type" value="Genomic_DNA"/>
</dbReference>
<dbReference type="RefSeq" id="WP_000355811.1">
    <property type="nucleotide sequence ID" value="NC_010102.1"/>
</dbReference>
<dbReference type="SMR" id="A9MYJ6"/>
<dbReference type="KEGG" id="spq:SPAB_00087"/>
<dbReference type="PATRIC" id="fig|1016998.12.peg.84"/>
<dbReference type="HOGENOM" id="CLU_000022_59_0_6"/>
<dbReference type="BioCyc" id="SENT1016998:SPAB_RS00350-MONOMER"/>
<dbReference type="UniPathway" id="UPA00117"/>
<dbReference type="Proteomes" id="UP000008556">
    <property type="component" value="Chromosome"/>
</dbReference>
<dbReference type="GO" id="GO:0051108">
    <property type="term" value="F:carnitine-CoA ligase activity"/>
    <property type="evidence" value="ECO:0007669"/>
    <property type="project" value="InterPro"/>
</dbReference>
<dbReference type="GO" id="GO:0051109">
    <property type="term" value="F:crotonobetaine-CoA ligase activity"/>
    <property type="evidence" value="ECO:0007669"/>
    <property type="project" value="InterPro"/>
</dbReference>
<dbReference type="GO" id="GO:0031956">
    <property type="term" value="F:medium-chain fatty acid-CoA ligase activity"/>
    <property type="evidence" value="ECO:0007669"/>
    <property type="project" value="TreeGrafter"/>
</dbReference>
<dbReference type="GO" id="GO:0009437">
    <property type="term" value="P:carnitine metabolic process"/>
    <property type="evidence" value="ECO:0007669"/>
    <property type="project" value="UniProtKB-UniRule"/>
</dbReference>
<dbReference type="GO" id="GO:0006631">
    <property type="term" value="P:fatty acid metabolic process"/>
    <property type="evidence" value="ECO:0007669"/>
    <property type="project" value="TreeGrafter"/>
</dbReference>
<dbReference type="CDD" id="cd05934">
    <property type="entry name" value="FACL_DitJ_like"/>
    <property type="match status" value="1"/>
</dbReference>
<dbReference type="FunFam" id="3.30.300.30:FF:000011">
    <property type="entry name" value="Crotonobetaine/carnitine--CoA ligase"/>
    <property type="match status" value="1"/>
</dbReference>
<dbReference type="Gene3D" id="3.30.300.30">
    <property type="match status" value="1"/>
</dbReference>
<dbReference type="Gene3D" id="3.40.50.12780">
    <property type="entry name" value="N-terminal domain of ligase-like"/>
    <property type="match status" value="1"/>
</dbReference>
<dbReference type="HAMAP" id="MF_01524">
    <property type="entry name" value="CaiC"/>
    <property type="match status" value="1"/>
</dbReference>
<dbReference type="InterPro" id="IPR025110">
    <property type="entry name" value="AMP-bd_C"/>
</dbReference>
<dbReference type="InterPro" id="IPR045851">
    <property type="entry name" value="AMP-bd_C_sf"/>
</dbReference>
<dbReference type="InterPro" id="IPR020845">
    <property type="entry name" value="AMP-binding_CS"/>
</dbReference>
<dbReference type="InterPro" id="IPR000873">
    <property type="entry name" value="AMP-dep_synth/lig_dom"/>
</dbReference>
<dbReference type="InterPro" id="IPR042099">
    <property type="entry name" value="ANL_N_sf"/>
</dbReference>
<dbReference type="InterPro" id="IPR023456">
    <property type="entry name" value="CaiC"/>
</dbReference>
<dbReference type="NCBIfam" id="NF005947">
    <property type="entry name" value="PRK08008.1"/>
    <property type="match status" value="1"/>
</dbReference>
<dbReference type="PANTHER" id="PTHR43201">
    <property type="entry name" value="ACYL-COA SYNTHETASE"/>
    <property type="match status" value="1"/>
</dbReference>
<dbReference type="PANTHER" id="PTHR43201:SF5">
    <property type="entry name" value="MEDIUM-CHAIN ACYL-COA LIGASE ACSF2, MITOCHONDRIAL"/>
    <property type="match status" value="1"/>
</dbReference>
<dbReference type="Pfam" id="PF00501">
    <property type="entry name" value="AMP-binding"/>
    <property type="match status" value="1"/>
</dbReference>
<dbReference type="Pfam" id="PF13193">
    <property type="entry name" value="AMP-binding_C"/>
    <property type="match status" value="1"/>
</dbReference>
<dbReference type="SUPFAM" id="SSF56801">
    <property type="entry name" value="Acetyl-CoA synthetase-like"/>
    <property type="match status" value="1"/>
</dbReference>
<dbReference type="PROSITE" id="PS00455">
    <property type="entry name" value="AMP_BINDING"/>
    <property type="match status" value="1"/>
</dbReference>
<feature type="chain" id="PRO_1000087572" description="Crotonobetaine/carnitine--CoA ligase">
    <location>
        <begin position="1"/>
        <end position="517"/>
    </location>
</feature>
<reference key="1">
    <citation type="submission" date="2007-11" db="EMBL/GenBank/DDBJ databases">
        <authorList>
            <consortium name="The Salmonella enterica serovar Paratyphi B Genome Sequencing Project"/>
            <person name="McClelland M."/>
            <person name="Sanderson E.K."/>
            <person name="Porwollik S."/>
            <person name="Spieth J."/>
            <person name="Clifton W.S."/>
            <person name="Fulton R."/>
            <person name="Cordes M."/>
            <person name="Wollam A."/>
            <person name="Shah N."/>
            <person name="Pepin K."/>
            <person name="Bhonagiri V."/>
            <person name="Nash W."/>
            <person name="Johnson M."/>
            <person name="Thiruvilangam P."/>
            <person name="Wilson R."/>
        </authorList>
    </citation>
    <scope>NUCLEOTIDE SEQUENCE [LARGE SCALE GENOMIC DNA]</scope>
    <source>
        <strain>ATCC BAA-1250 / SPB7</strain>
    </source>
</reference>
<keyword id="KW-0436">Ligase</keyword>
<gene>
    <name evidence="1" type="primary">caiC</name>
    <name type="ordered locus">SPAB_00087</name>
</gene>
<proteinExistence type="inferred from homology"/>